<reference key="1">
    <citation type="journal article" date="1999" name="Nature">
        <title>Sequence and analysis of chromosome 2 of the plant Arabidopsis thaliana.</title>
        <authorList>
            <person name="Lin X."/>
            <person name="Kaul S."/>
            <person name="Rounsley S.D."/>
            <person name="Shea T.P."/>
            <person name="Benito M.-I."/>
            <person name="Town C.D."/>
            <person name="Fujii C.Y."/>
            <person name="Mason T.M."/>
            <person name="Bowman C.L."/>
            <person name="Barnstead M.E."/>
            <person name="Feldblyum T.V."/>
            <person name="Buell C.R."/>
            <person name="Ketchum K.A."/>
            <person name="Lee J.J."/>
            <person name="Ronning C.M."/>
            <person name="Koo H.L."/>
            <person name="Moffat K.S."/>
            <person name="Cronin L.A."/>
            <person name="Shen M."/>
            <person name="Pai G."/>
            <person name="Van Aken S."/>
            <person name="Umayam L."/>
            <person name="Tallon L.J."/>
            <person name="Gill J.E."/>
            <person name="Adams M.D."/>
            <person name="Carrera A.J."/>
            <person name="Creasy T.H."/>
            <person name="Goodman H.M."/>
            <person name="Somerville C.R."/>
            <person name="Copenhaver G.P."/>
            <person name="Preuss D."/>
            <person name="Nierman W.C."/>
            <person name="White O."/>
            <person name="Eisen J.A."/>
            <person name="Salzberg S.L."/>
            <person name="Fraser C.M."/>
            <person name="Venter J.C."/>
        </authorList>
    </citation>
    <scope>NUCLEOTIDE SEQUENCE [LARGE SCALE GENOMIC DNA]</scope>
    <source>
        <strain>cv. Columbia</strain>
    </source>
</reference>
<reference key="2">
    <citation type="journal article" date="2017" name="Plant J.">
        <title>Araport11: a complete reannotation of the Arabidopsis thaliana reference genome.</title>
        <authorList>
            <person name="Cheng C.Y."/>
            <person name="Krishnakumar V."/>
            <person name="Chan A.P."/>
            <person name="Thibaud-Nissen F."/>
            <person name="Schobel S."/>
            <person name="Town C.D."/>
        </authorList>
    </citation>
    <scope>GENOME REANNOTATION</scope>
    <source>
        <strain>cv. Columbia</strain>
    </source>
</reference>
<reference key="3">
    <citation type="journal article" date="2003" name="Science">
        <title>Empirical analysis of transcriptional activity in the Arabidopsis genome.</title>
        <authorList>
            <person name="Yamada K."/>
            <person name="Lim J."/>
            <person name="Dale J.M."/>
            <person name="Chen H."/>
            <person name="Shinn P."/>
            <person name="Palm C.J."/>
            <person name="Southwick A.M."/>
            <person name="Wu H.C."/>
            <person name="Kim C.J."/>
            <person name="Nguyen M."/>
            <person name="Pham P.K."/>
            <person name="Cheuk R.F."/>
            <person name="Karlin-Newmann G."/>
            <person name="Liu S.X."/>
            <person name="Lam B."/>
            <person name="Sakano H."/>
            <person name="Wu T."/>
            <person name="Yu G."/>
            <person name="Miranda M."/>
            <person name="Quach H.L."/>
            <person name="Tripp M."/>
            <person name="Chang C.H."/>
            <person name="Lee J.M."/>
            <person name="Toriumi M.J."/>
            <person name="Chan M.M."/>
            <person name="Tang C.C."/>
            <person name="Onodera C.S."/>
            <person name="Deng J.M."/>
            <person name="Akiyama K."/>
            <person name="Ansari Y."/>
            <person name="Arakawa T."/>
            <person name="Banh J."/>
            <person name="Banno F."/>
            <person name="Bowser L."/>
            <person name="Brooks S.Y."/>
            <person name="Carninci P."/>
            <person name="Chao Q."/>
            <person name="Choy N."/>
            <person name="Enju A."/>
            <person name="Goldsmith A.D."/>
            <person name="Gurjal M."/>
            <person name="Hansen N.F."/>
            <person name="Hayashizaki Y."/>
            <person name="Johnson-Hopson C."/>
            <person name="Hsuan V.W."/>
            <person name="Iida K."/>
            <person name="Karnes M."/>
            <person name="Khan S."/>
            <person name="Koesema E."/>
            <person name="Ishida J."/>
            <person name="Jiang P.X."/>
            <person name="Jones T."/>
            <person name="Kawai J."/>
            <person name="Kamiya A."/>
            <person name="Meyers C."/>
            <person name="Nakajima M."/>
            <person name="Narusaka M."/>
            <person name="Seki M."/>
            <person name="Sakurai T."/>
            <person name="Satou M."/>
            <person name="Tamse R."/>
            <person name="Vaysberg M."/>
            <person name="Wallender E.K."/>
            <person name="Wong C."/>
            <person name="Yamamura Y."/>
            <person name="Yuan S."/>
            <person name="Shinozaki K."/>
            <person name="Davis R.W."/>
            <person name="Theologis A."/>
            <person name="Ecker J.R."/>
        </authorList>
    </citation>
    <scope>NUCLEOTIDE SEQUENCE [LARGE SCALE MRNA]</scope>
    <source>
        <strain>cv. Columbia</strain>
    </source>
</reference>
<reference key="4">
    <citation type="submission" date="2008-10" db="EMBL/GenBank/DDBJ databases">
        <title>Arabidopsis ORF clones.</title>
        <authorList>
            <person name="de los Reyes C."/>
            <person name="Quan R."/>
            <person name="Chen H."/>
            <person name="Bautista V."/>
            <person name="Kim C.J."/>
            <person name="Ecker J.R."/>
        </authorList>
    </citation>
    <scope>NUCLEOTIDE SEQUENCE [LARGE SCALE MRNA]</scope>
    <source>
        <strain>cv. Columbia</strain>
    </source>
</reference>
<reference key="5">
    <citation type="journal article" date="2012" name="Plant Physiol.">
        <title>LYK4, a lysin motif receptor-like kinase, is important for chitin signaling and plant innate immunity in Arabidopsis.</title>
        <authorList>
            <person name="Wan J."/>
            <person name="Tanaka K."/>
            <person name="Zhang X.-C."/>
            <person name="Son G.H."/>
            <person name="Brechenmacher L."/>
            <person name="Nguyen T.H.N."/>
            <person name="Stacey G."/>
        </authorList>
    </citation>
    <scope>INDUCTION BY CHITIN</scope>
</reference>
<organism>
    <name type="scientific">Arabidopsis thaliana</name>
    <name type="common">Mouse-ear cress</name>
    <dbReference type="NCBI Taxonomy" id="3702"/>
    <lineage>
        <taxon>Eukaryota</taxon>
        <taxon>Viridiplantae</taxon>
        <taxon>Streptophyta</taxon>
        <taxon>Embryophyta</taxon>
        <taxon>Tracheophyta</taxon>
        <taxon>Spermatophyta</taxon>
        <taxon>Magnoliopsida</taxon>
        <taxon>eudicotyledons</taxon>
        <taxon>Gunneridae</taxon>
        <taxon>Pentapetalae</taxon>
        <taxon>rosids</taxon>
        <taxon>malvids</taxon>
        <taxon>Brassicales</taxon>
        <taxon>Brassicaceae</taxon>
        <taxon>Camelineae</taxon>
        <taxon>Arabidopsis</taxon>
    </lineage>
</organism>
<gene>
    <name type="primary">LYK5</name>
    <name type="ordered locus">At2g33580</name>
    <name type="ORF">F4P9.35</name>
</gene>
<proteinExistence type="evidence at transcript level"/>
<comment type="function">
    <text evidence="1">May recognize microbe-derived N-acetylglucosamine (NAG)-containing ligands.</text>
</comment>
<comment type="subcellular location">
    <subcellularLocation>
        <location evidence="7">Cell membrane</location>
        <topology evidence="7">Single-pass membrane protein</topology>
    </subcellularLocation>
</comment>
<comment type="induction">
    <text evidence="6">Moderately induced by chitin oligomers (e.g. chitohexaose (6-mer) and chitooctaose (8-mer)).</text>
</comment>
<comment type="domain">
    <text>The protein kinase domain is predicted to be catalytically inactive.</text>
</comment>
<comment type="similarity">
    <text evidence="3">Belongs to the protein kinase superfamily. Ser/Thr protein kinase family.</text>
</comment>
<accession>O22808</accession>
<feature type="signal peptide" evidence="2">
    <location>
        <begin position="1"/>
        <end position="26"/>
    </location>
</feature>
<feature type="chain" id="PRO_0000420831" description="Protein LYK5">
    <location>
        <begin position="27"/>
        <end position="664"/>
    </location>
</feature>
<feature type="topological domain" description="Extracellular" evidence="2">
    <location>
        <begin position="27"/>
        <end position="277"/>
    </location>
</feature>
<feature type="transmembrane region" description="Helical" evidence="2">
    <location>
        <begin position="278"/>
        <end position="298"/>
    </location>
</feature>
<feature type="topological domain" description="Cytoplasmic" evidence="2">
    <location>
        <begin position="299"/>
        <end position="664"/>
    </location>
</feature>
<feature type="domain" description="LysM" evidence="4">
    <location>
        <begin position="195"/>
        <end position="238"/>
    </location>
</feature>
<feature type="domain" description="Protein kinase" evidence="3">
    <location>
        <begin position="351"/>
        <end position="643"/>
    </location>
</feature>
<feature type="region of interest" description="Disordered" evidence="5">
    <location>
        <begin position="251"/>
        <end position="270"/>
    </location>
</feature>
<feature type="compositionally biased region" description="Pro residues" evidence="5">
    <location>
        <begin position="251"/>
        <end position="269"/>
    </location>
</feature>
<feature type="binding site" evidence="1">
    <location>
        <begin position="135"/>
        <end position="141"/>
    </location>
    <ligand>
        <name>chitin</name>
        <dbReference type="ChEBI" id="CHEBI:17029"/>
    </ligand>
</feature>
<feature type="binding site" evidence="1">
    <location>
        <begin position="164"/>
        <end position="170"/>
    </location>
    <ligand>
        <name>chitin</name>
        <dbReference type="ChEBI" id="CHEBI:17029"/>
    </ligand>
</feature>
<feature type="binding site" evidence="3">
    <location>
        <begin position="357"/>
        <end position="365"/>
    </location>
    <ligand>
        <name>ATP</name>
        <dbReference type="ChEBI" id="CHEBI:30616"/>
    </ligand>
</feature>
<feature type="binding site" evidence="3">
    <location>
        <position position="395"/>
    </location>
    <ligand>
        <name>ATP</name>
        <dbReference type="ChEBI" id="CHEBI:30616"/>
    </ligand>
</feature>
<feature type="glycosylation site" description="N-linked (GlcNAc...) asparagine" evidence="2">
    <location>
        <position position="45"/>
    </location>
</feature>
<feature type="glycosylation site" description="N-linked (GlcNAc...) asparagine" evidence="2">
    <location>
        <position position="81"/>
    </location>
</feature>
<feature type="glycosylation site" description="N-linked (GlcNAc...) asparagine" evidence="2">
    <location>
        <position position="111"/>
    </location>
</feature>
<feature type="glycosylation site" description="N-linked (GlcNAc...) asparagine" evidence="2">
    <location>
        <position position="125"/>
    </location>
</feature>
<feature type="glycosylation site" description="N-linked (GlcNAc...) asparagine" evidence="2">
    <location>
        <position position="129"/>
    </location>
</feature>
<feature type="glycosylation site" description="N-linked (GlcNAc...) asparagine" evidence="2">
    <location>
        <position position="144"/>
    </location>
</feature>
<feature type="glycosylation site" description="N-linked (GlcNAc...) asparagine" evidence="2">
    <location>
        <position position="213"/>
    </location>
</feature>
<feature type="disulfide bond" evidence="1">
    <location>
        <begin position="52"/>
        <end position="114"/>
    </location>
</feature>
<feature type="disulfide bond" evidence="1">
    <location>
        <begin position="58"/>
        <end position="181"/>
    </location>
</feature>
<feature type="disulfide bond" evidence="1">
    <location>
        <begin position="112"/>
        <end position="179"/>
    </location>
</feature>
<keyword id="KW-0067">ATP-binding</keyword>
<keyword id="KW-1003">Cell membrane</keyword>
<keyword id="KW-1015">Disulfide bond</keyword>
<keyword id="KW-0325">Glycoprotein</keyword>
<keyword id="KW-0472">Membrane</keyword>
<keyword id="KW-0547">Nucleotide-binding</keyword>
<keyword id="KW-1185">Reference proteome</keyword>
<keyword id="KW-0677">Repeat</keyword>
<keyword id="KW-0732">Signal</keyword>
<keyword id="KW-0812">Transmembrane</keyword>
<keyword id="KW-1133">Transmembrane helix</keyword>
<protein>
    <recommendedName>
        <fullName>Protein LYK5</fullName>
    </recommendedName>
    <alternativeName>
        <fullName>LysM domain receptor-like kinase 5</fullName>
    </alternativeName>
    <alternativeName>
        <fullName>LysM-containing receptor-like kinase 5</fullName>
    </alternativeName>
</protein>
<evidence type="ECO:0000250" key="1"/>
<evidence type="ECO:0000255" key="2"/>
<evidence type="ECO:0000255" key="3">
    <source>
        <dbReference type="PROSITE-ProRule" id="PRU00159"/>
    </source>
</evidence>
<evidence type="ECO:0000255" key="4">
    <source>
        <dbReference type="PROSITE-ProRule" id="PRU01118"/>
    </source>
</evidence>
<evidence type="ECO:0000256" key="5">
    <source>
        <dbReference type="SAM" id="MobiDB-lite"/>
    </source>
</evidence>
<evidence type="ECO:0000269" key="6">
    <source>
    </source>
</evidence>
<evidence type="ECO:0000305" key="7"/>
<sequence>MAACTLHALSVTLFLLLFFAVSPAKAQQPYVNNHQLACEVRVYDNITNGFTCNGPPSCRSYLTFWSQPPYNTADSIAKLLNVSAAEIQSINNLPTATTRIPTRELVVIPANCSCSSSSGGFYQHNATYNLSGNRGDETYFSVANDTYQALSTCQAMMSQNRYGERQLTPGLNLLVPLRCACPTAKQTTAGFKYLLTYLVAMGDSISGIAEMFNSTSAAITEGNELTSDNIFFFTPVLVPLTTEPTKIVISPSPPPPPVVATPPQTPVDPPGSSSSHKWIYIGIGIGAGLLLLLSILALCFYKRRSKKKSLPSSLPEENKLFDSSTKQSIPTTTTTQWSIDLSNSSEAFGLKSAIESLTLYRFNDLQSATSNFSDENRIKGSVYRATINGDDAAVKVIKGDVSSSEINLLKKLNHSNIIRLSGFCIREGTSYLVFEYSENGSISDWLHSSGKKSLTWKQRVEIARDVAEALDYLHNYITPPHIHKNLESTNILLDSNFRAKIANFGVARILDEGDLDLQLTRHVEGTQGYLAPEYVENGVITSKLDVFAFGVAVLELLSGREAVTIHKKKEGEEEVEMLCKVINSVLGGENVREKLKEFMDPSLGNEYPLELAYTMAQLAKSCVATDLNSRPSVTQVLTTLSMIVSSSIDWEPSDDLLRSGSLGN</sequence>
<name>LYK5_ARATH</name>
<dbReference type="EMBL" id="AC002332">
    <property type="protein sequence ID" value="AAB80675.1"/>
    <property type="molecule type" value="Genomic_DNA"/>
</dbReference>
<dbReference type="EMBL" id="CP002685">
    <property type="protein sequence ID" value="AEC08855.1"/>
    <property type="molecule type" value="Genomic_DNA"/>
</dbReference>
<dbReference type="EMBL" id="AF370600">
    <property type="protein sequence ID" value="AAK43919.1"/>
    <property type="molecule type" value="mRNA"/>
</dbReference>
<dbReference type="EMBL" id="BT046191">
    <property type="protein sequence ID" value="ACI49790.1"/>
    <property type="molecule type" value="mRNA"/>
</dbReference>
<dbReference type="PIR" id="C84747">
    <property type="entry name" value="C84747"/>
</dbReference>
<dbReference type="RefSeq" id="NP_180916.1">
    <property type="nucleotide sequence ID" value="NM_128918.5"/>
</dbReference>
<dbReference type="SMR" id="O22808"/>
<dbReference type="BioGRID" id="3270">
    <property type="interactions" value="13"/>
</dbReference>
<dbReference type="FunCoup" id="O22808">
    <property type="interactions" value="224"/>
</dbReference>
<dbReference type="IntAct" id="O22808">
    <property type="interactions" value="10"/>
</dbReference>
<dbReference type="STRING" id="3702.O22808"/>
<dbReference type="GlyCosmos" id="O22808">
    <property type="glycosylation" value="7 sites, No reported glycans"/>
</dbReference>
<dbReference type="GlyGen" id="O22808">
    <property type="glycosylation" value="8 sites"/>
</dbReference>
<dbReference type="iPTMnet" id="O22808"/>
<dbReference type="SwissPalm" id="O22808"/>
<dbReference type="PaxDb" id="3702-AT2G33580.1"/>
<dbReference type="ProteomicsDB" id="238746"/>
<dbReference type="EnsemblPlants" id="AT2G33580.1">
    <property type="protein sequence ID" value="AT2G33580.1"/>
    <property type="gene ID" value="AT2G33580"/>
</dbReference>
<dbReference type="GeneID" id="817923"/>
<dbReference type="Gramene" id="AT2G33580.1">
    <property type="protein sequence ID" value="AT2G33580.1"/>
    <property type="gene ID" value="AT2G33580"/>
</dbReference>
<dbReference type="KEGG" id="ath:AT2G33580"/>
<dbReference type="Araport" id="AT2G33580"/>
<dbReference type="TAIR" id="AT2G33580">
    <property type="gene designation" value="LYK5"/>
</dbReference>
<dbReference type="eggNOG" id="ENOG502QSFN">
    <property type="taxonomic scope" value="Eukaryota"/>
</dbReference>
<dbReference type="HOGENOM" id="CLU_000288_99_1_1"/>
<dbReference type="InParanoid" id="O22808"/>
<dbReference type="OMA" id="RHVEGTQ"/>
<dbReference type="OrthoDB" id="4062651at2759"/>
<dbReference type="PhylomeDB" id="O22808"/>
<dbReference type="PRO" id="PR:O22808"/>
<dbReference type="Proteomes" id="UP000006548">
    <property type="component" value="Chromosome 2"/>
</dbReference>
<dbReference type="ExpressionAtlas" id="O22808">
    <property type="expression patterns" value="baseline and differential"/>
</dbReference>
<dbReference type="GO" id="GO:0005886">
    <property type="term" value="C:plasma membrane"/>
    <property type="evidence" value="ECO:0000314"/>
    <property type="project" value="TAIR"/>
</dbReference>
<dbReference type="GO" id="GO:0005524">
    <property type="term" value="F:ATP binding"/>
    <property type="evidence" value="ECO:0007669"/>
    <property type="project" value="UniProtKB-KW"/>
</dbReference>
<dbReference type="GO" id="GO:0008061">
    <property type="term" value="F:chitin binding"/>
    <property type="evidence" value="ECO:0000314"/>
    <property type="project" value="TAIR"/>
</dbReference>
<dbReference type="GO" id="GO:0042803">
    <property type="term" value="F:protein homodimerization activity"/>
    <property type="evidence" value="ECO:0000353"/>
    <property type="project" value="TAIR"/>
</dbReference>
<dbReference type="GO" id="GO:0004672">
    <property type="term" value="F:protein kinase activity"/>
    <property type="evidence" value="ECO:0007669"/>
    <property type="project" value="InterPro"/>
</dbReference>
<dbReference type="GO" id="GO:0071323">
    <property type="term" value="P:cellular response to chitin"/>
    <property type="evidence" value="ECO:0000270"/>
    <property type="project" value="UniProtKB"/>
</dbReference>
<dbReference type="GO" id="GO:0045087">
    <property type="term" value="P:innate immune response"/>
    <property type="evidence" value="ECO:0000315"/>
    <property type="project" value="TAIR"/>
</dbReference>
<dbReference type="FunFam" id="1.10.510.10:FF:000468">
    <property type="entry name" value="PTI1-like tyrosine-protein kinase 3"/>
    <property type="match status" value="1"/>
</dbReference>
<dbReference type="FunFam" id="3.30.200.20:FF:001125">
    <property type="entry name" value="Serine/threonine receptor-like kinase NFP"/>
    <property type="match status" value="1"/>
</dbReference>
<dbReference type="Gene3D" id="3.30.200.20">
    <property type="entry name" value="Phosphorylase Kinase, domain 1"/>
    <property type="match status" value="1"/>
</dbReference>
<dbReference type="Gene3D" id="1.10.510.10">
    <property type="entry name" value="Transferase(Phosphotransferase) domain 1"/>
    <property type="match status" value="1"/>
</dbReference>
<dbReference type="InterPro" id="IPR011009">
    <property type="entry name" value="Kinase-like_dom_sf"/>
</dbReference>
<dbReference type="InterPro" id="IPR056561">
    <property type="entry name" value="LysM1_NFP_LYK"/>
</dbReference>
<dbReference type="InterPro" id="IPR056562">
    <property type="entry name" value="LysM2_CERK1_LYK3_4_5"/>
</dbReference>
<dbReference type="InterPro" id="IPR056563">
    <property type="entry name" value="LysM3_LYK4_5"/>
</dbReference>
<dbReference type="InterPro" id="IPR018392">
    <property type="entry name" value="LysM_dom"/>
</dbReference>
<dbReference type="InterPro" id="IPR052611">
    <property type="entry name" value="Plant_RLK_LysM"/>
</dbReference>
<dbReference type="InterPro" id="IPR000719">
    <property type="entry name" value="Prot_kinase_dom"/>
</dbReference>
<dbReference type="PANTHER" id="PTHR45927">
    <property type="entry name" value="LYSM-DOMAIN RECEPTOR-LIKE KINASE-RELATED"/>
    <property type="match status" value="1"/>
</dbReference>
<dbReference type="PANTHER" id="PTHR45927:SF6">
    <property type="entry name" value="PROTEIN LYK5"/>
    <property type="match status" value="1"/>
</dbReference>
<dbReference type="Pfam" id="PF23446">
    <property type="entry name" value="LysM1_NFP_LYK"/>
    <property type="match status" value="1"/>
</dbReference>
<dbReference type="Pfam" id="PF23472">
    <property type="entry name" value="LysM2_CERK1_LYK3_4_5"/>
    <property type="match status" value="1"/>
</dbReference>
<dbReference type="Pfam" id="PF23473">
    <property type="entry name" value="LysM3_LYK4_5"/>
    <property type="match status" value="1"/>
</dbReference>
<dbReference type="Pfam" id="PF00069">
    <property type="entry name" value="Pkinase"/>
    <property type="match status" value="1"/>
</dbReference>
<dbReference type="SUPFAM" id="SSF56112">
    <property type="entry name" value="Protein kinase-like (PK-like)"/>
    <property type="match status" value="1"/>
</dbReference>
<dbReference type="PROSITE" id="PS51782">
    <property type="entry name" value="LYSM"/>
    <property type="match status" value="1"/>
</dbReference>
<dbReference type="PROSITE" id="PS50011">
    <property type="entry name" value="PROTEIN_KINASE_DOM"/>
    <property type="match status" value="1"/>
</dbReference>